<comment type="function">
    <text evidence="1 3 4">Catalyzes the reduction of hydroxylamine to form NH(3) and H(2)O. Is also able to reduce hydroxylamine analogs such as methylhydroxylamine and hydroxyquinone. Might have a role as a scavenger of potentially toxic by-products of nitrate metabolism.</text>
</comment>
<comment type="catalytic activity">
    <reaction evidence="1 4">
        <text>A + NH4(+) + H2O = hydroxylamine + AH2 + H(+)</text>
        <dbReference type="Rhea" id="RHEA:22052"/>
        <dbReference type="ChEBI" id="CHEBI:13193"/>
        <dbReference type="ChEBI" id="CHEBI:15377"/>
        <dbReference type="ChEBI" id="CHEBI:15378"/>
        <dbReference type="ChEBI" id="CHEBI:15429"/>
        <dbReference type="ChEBI" id="CHEBI:17499"/>
        <dbReference type="ChEBI" id="CHEBI:28938"/>
        <dbReference type="EC" id="1.7.99.1"/>
    </reaction>
</comment>
<comment type="cofactor">
    <cofactor evidence="1 2 3">
        <name>[2Fe-2S] cluster</name>
        <dbReference type="ChEBI" id="CHEBI:190135"/>
    </cofactor>
    <text evidence="1 2 3">Binds 1 [2Fe-2S] cluster.</text>
</comment>
<comment type="cofactor">
    <cofactor evidence="1 2 3">
        <name>hybrid [4Fe-2O-2S] cluster</name>
        <dbReference type="ChEBI" id="CHEBI:60519"/>
    </cofactor>
    <text evidence="1 2 3">Binds 1 hybrid [4Fe-2O-2S] cluster.</text>
</comment>
<comment type="activity regulation">
    <text evidence="4">Inhibited by oxygen. Activated by cyanide except in the prolonged presence of excess cyanide, where the enzyme is inactivated.</text>
</comment>
<comment type="biophysicochemical properties">
    <kinetics>
        <KM evidence="4">2.5 mM for hydroxylamine (at pH 9)</KM>
        <Vmax evidence="4">92.0 umol/min/mg enzyme (at pH 7.5)</Vmax>
        <Vmax evidence="4">458.0 umol/min/mg enzyme (at pH 9)</Vmax>
    </kinetics>
    <phDependence>
        <text evidence="4">Optimum pH is 9.0.</text>
    </phDependence>
</comment>
<comment type="subcellular location">
    <subcellularLocation>
        <location evidence="1">Cytoplasm</location>
    </subcellularLocation>
</comment>
<comment type="induction">
    <text evidence="5">By Fnr, NarL and NarP under anaerobic conditions in the presence of either nitrate or nitrite.</text>
</comment>
<comment type="similarity">
    <text evidence="1">Belongs to the HCP family.</text>
</comment>
<sequence>MFCVQCEQTIRTPAGNGCSYAQGMCGKTAETSDLQDLLIAALQGLSAWAVKAREYGIINHDVDSFAPRAFFSTLTNVNFDSPRIVGYAREAIALREALKAQCLAVDANARVDNPMADLQLVSDDLGELQRQAAEFTPNKDKAAIGENILGLRLLCLYGLKGAAAYMEHAHVLGQYDNDIYAQYHKIMAWLGTWPADMNALLECSMEIGQMNFKVMSILDAGETGKYGHPTPTQVNVKATAGKCILISGHDLKDLYNLLEQTEGTGVNVYTHGEMLPAHGYPELRKFKHLVGNYGSGWQNQQVEFARFPGPIVMTSNCIIDPTVGAYDDRIWTRSIVGWPGVRHLDGDDFSAVITQAQQMAGFPYSEIPHLITVGFGRQTLLGAADTLIDLVSREKLRHIFLLGGCDGARGERHYFTDFATSVPDDCLILTLACGKYRFNKLEFGDIEGLPRLVDAGQCNDAYSAIILAVTLAEKLGCGVNDLPLSLVLSWFEQKAIVILLTLLSLGVKNIVTGPTAPGFLTPDLLAVLNEKFGLRSITTVEEDMKQLLSA</sequence>
<reference key="1">
    <citation type="journal article" date="1996" name="DNA Res.">
        <title>A 718-kb DNA sequence of the Escherichia coli K-12 genome corresponding to the 12.7-28.0 min region on the linkage map.</title>
        <authorList>
            <person name="Oshima T."/>
            <person name="Aiba H."/>
            <person name="Baba T."/>
            <person name="Fujita K."/>
            <person name="Hayashi K."/>
            <person name="Honjo A."/>
            <person name="Ikemoto K."/>
            <person name="Inada T."/>
            <person name="Itoh T."/>
            <person name="Kajihara M."/>
            <person name="Kanai K."/>
            <person name="Kashimoto K."/>
            <person name="Kimura S."/>
            <person name="Kitagawa M."/>
            <person name="Makino K."/>
            <person name="Masuda S."/>
            <person name="Miki T."/>
            <person name="Mizobuchi K."/>
            <person name="Mori H."/>
            <person name="Motomura K."/>
            <person name="Nakamura Y."/>
            <person name="Nashimoto H."/>
            <person name="Nishio Y."/>
            <person name="Saito N."/>
            <person name="Sampei G."/>
            <person name="Seki Y."/>
            <person name="Tagami H."/>
            <person name="Takemoto K."/>
            <person name="Wada C."/>
            <person name="Yamamoto Y."/>
            <person name="Yano M."/>
            <person name="Horiuchi T."/>
        </authorList>
    </citation>
    <scope>NUCLEOTIDE SEQUENCE [LARGE SCALE GENOMIC DNA]</scope>
    <source>
        <strain>K12 / W3110 / ATCC 27325 / DSM 5911</strain>
    </source>
</reference>
<reference key="2">
    <citation type="journal article" date="1997" name="Science">
        <title>The complete genome sequence of Escherichia coli K-12.</title>
        <authorList>
            <person name="Blattner F.R."/>
            <person name="Plunkett G. III"/>
            <person name="Bloch C.A."/>
            <person name="Perna N.T."/>
            <person name="Burland V."/>
            <person name="Riley M."/>
            <person name="Collado-Vides J."/>
            <person name="Glasner J.D."/>
            <person name="Rode C.K."/>
            <person name="Mayhew G.F."/>
            <person name="Gregor J."/>
            <person name="Davis N.W."/>
            <person name="Kirkpatrick H.A."/>
            <person name="Goeden M.A."/>
            <person name="Rose D.J."/>
            <person name="Mau B."/>
            <person name="Shao Y."/>
        </authorList>
    </citation>
    <scope>NUCLEOTIDE SEQUENCE [LARGE SCALE GENOMIC DNA]</scope>
    <source>
        <strain>K12 / MG1655 / ATCC 47076</strain>
    </source>
</reference>
<reference key="3">
    <citation type="journal article" date="2006" name="Mol. Syst. Biol.">
        <title>Highly accurate genome sequences of Escherichia coli K-12 strains MG1655 and W3110.</title>
        <authorList>
            <person name="Hayashi K."/>
            <person name="Morooka N."/>
            <person name="Yamamoto Y."/>
            <person name="Fujita K."/>
            <person name="Isono K."/>
            <person name="Choi S."/>
            <person name="Ohtsubo E."/>
            <person name="Baba T."/>
            <person name="Wanner B.L."/>
            <person name="Mori H."/>
            <person name="Horiuchi T."/>
        </authorList>
    </citation>
    <scope>NUCLEOTIDE SEQUENCE [LARGE SCALE GENOMIC DNA]</scope>
    <scope>SEQUENCE REVISION TO 134</scope>
    <source>
        <strain>K12 / W3110 / ATCC 27325 / DSM 5911</strain>
    </source>
</reference>
<reference key="4">
    <citation type="journal article" date="1999" name="Biochem. Biophys. Res. Commun.">
        <title>Biochemical and spectroscopic characterization of overexpressed fuscoredoxin from Escherichia coli.</title>
        <authorList>
            <person name="Pereira A.S."/>
            <person name="Tavares P."/>
            <person name="Krebs C."/>
            <person name="Huynh B.H."/>
            <person name="Rusnak F."/>
            <person name="Moura I."/>
            <person name="Moura J.J."/>
        </authorList>
    </citation>
    <scope>COFACTOR</scope>
</reference>
<reference key="5">
    <citation type="journal article" date="2000" name="Eur. J. Biochem.">
        <title>The hybrid-cluster protein ('prismane protein') from Escherichia coli. Characterization of the hybrid-cluster protein, redox properties of the [2Fe-2S] and [4Fe-2S-2O] clusters and identification of an associated NADH oxidoreductase containing FAD and 2Fe-2S.</title>
        <authorList>
            <person name="van den Berg W.A.M."/>
            <person name="Hagen W.R."/>
            <person name="van Dongen W.M.A.M."/>
        </authorList>
    </citation>
    <scope>FUNCTION</scope>
    <scope>COFACTOR</scope>
</reference>
<reference key="6">
    <citation type="journal article" date="2002" name="J. Bacteriol.">
        <title>Hydroxylamine reductase activity of the hybrid cluster protein from Escherichia coli.</title>
        <authorList>
            <person name="Wolfe M.T."/>
            <person name="Heo J."/>
            <person name="Garavelli J.S."/>
            <person name="Ludden P.W."/>
        </authorList>
    </citation>
    <scope>FUNCTION</scope>
    <scope>CATALYTIC ACTIVITY</scope>
    <scope>BIOPHYSICOCHEMICAL PROPERTIES</scope>
    <scope>SUBSTRATE SPECIFICITY</scope>
    <scope>ACTIVITY REGULATION</scope>
</reference>
<reference key="7">
    <citation type="journal article" date="2005" name="Biochem. Soc. Trans.">
        <title>Transcriptional regulation of a hybrid cluster (prismane) protein.</title>
        <authorList>
            <person name="Filenko N.A."/>
            <person name="Browning D.F."/>
            <person name="Cole J.A."/>
        </authorList>
    </citation>
    <scope>INDUCTION</scope>
</reference>
<dbReference type="EC" id="1.7.99.1" evidence="4"/>
<dbReference type="EMBL" id="U00096">
    <property type="protein sequence ID" value="AAC73960.2"/>
    <property type="molecule type" value="Genomic_DNA"/>
</dbReference>
<dbReference type="EMBL" id="AP009048">
    <property type="protein sequence ID" value="BAA35587.2"/>
    <property type="molecule type" value="Genomic_DNA"/>
</dbReference>
<dbReference type="PIR" id="A64826">
    <property type="entry name" value="A64826"/>
</dbReference>
<dbReference type="RefSeq" id="NP_415394.4">
    <property type="nucleotide sequence ID" value="NC_000913.3"/>
</dbReference>
<dbReference type="RefSeq" id="WP_000458809.1">
    <property type="nucleotide sequence ID" value="NZ_SSZK01000002.1"/>
</dbReference>
<dbReference type="PDB" id="7DE4">
    <property type="method" value="X-ray"/>
    <property type="resolution" value="3.61 A"/>
    <property type="chains" value="A=1-550"/>
</dbReference>
<dbReference type="PDBsum" id="7DE4"/>
<dbReference type="SMR" id="P75825"/>
<dbReference type="BioGRID" id="4262100">
    <property type="interactions" value="12"/>
</dbReference>
<dbReference type="BioGRID" id="850939">
    <property type="interactions" value="4"/>
</dbReference>
<dbReference type="DIP" id="DIP-9870N"/>
<dbReference type="FunCoup" id="P75825">
    <property type="interactions" value="99"/>
</dbReference>
<dbReference type="IntAct" id="P75825">
    <property type="interactions" value="5"/>
</dbReference>
<dbReference type="STRING" id="511145.b0873"/>
<dbReference type="jPOST" id="P75825"/>
<dbReference type="PaxDb" id="511145-b0873"/>
<dbReference type="EnsemblBacteria" id="AAC73960">
    <property type="protein sequence ID" value="AAC73960"/>
    <property type="gene ID" value="b0873"/>
</dbReference>
<dbReference type="GeneID" id="946592"/>
<dbReference type="KEGG" id="ecj:JW0857"/>
<dbReference type="KEGG" id="eco:b0873"/>
<dbReference type="KEGG" id="ecoc:C3026_05425"/>
<dbReference type="PATRIC" id="fig|1411691.4.peg.1404"/>
<dbReference type="EchoBASE" id="EB3456"/>
<dbReference type="eggNOG" id="COG1151">
    <property type="taxonomic scope" value="Bacteria"/>
</dbReference>
<dbReference type="HOGENOM" id="CLU_038344_2_0_6"/>
<dbReference type="InParanoid" id="P75825"/>
<dbReference type="OMA" id="AYAQGMC"/>
<dbReference type="OrthoDB" id="9761526at2"/>
<dbReference type="PhylomeDB" id="P75825"/>
<dbReference type="BioCyc" id="EcoCyc:G6457-MONOMER"/>
<dbReference type="BioCyc" id="MetaCyc:G6457-MONOMER"/>
<dbReference type="PHI-base" id="PHI:12049"/>
<dbReference type="PRO" id="PR:P75825"/>
<dbReference type="Proteomes" id="UP000000625">
    <property type="component" value="Chromosome"/>
</dbReference>
<dbReference type="GO" id="GO:0005737">
    <property type="term" value="C:cytoplasm"/>
    <property type="evidence" value="ECO:0007669"/>
    <property type="project" value="UniProtKB-SubCell"/>
</dbReference>
<dbReference type="GO" id="GO:0051537">
    <property type="term" value="F:2 iron, 2 sulfur cluster binding"/>
    <property type="evidence" value="ECO:0007669"/>
    <property type="project" value="UniProtKB-KW"/>
</dbReference>
<dbReference type="GO" id="GO:0050418">
    <property type="term" value="F:hydroxylamine reductase activity"/>
    <property type="evidence" value="ECO:0000314"/>
    <property type="project" value="EcoCyc"/>
</dbReference>
<dbReference type="GO" id="GO:0046872">
    <property type="term" value="F:metal ion binding"/>
    <property type="evidence" value="ECO:0007669"/>
    <property type="project" value="UniProtKB-KW"/>
</dbReference>
<dbReference type="GO" id="GO:0016491">
    <property type="term" value="F:oxidoreductase activity"/>
    <property type="evidence" value="ECO:0000314"/>
    <property type="project" value="EcoliWiki"/>
</dbReference>
<dbReference type="GO" id="GO:0004601">
    <property type="term" value="F:peroxidase activity"/>
    <property type="evidence" value="ECO:0000314"/>
    <property type="project" value="EcoliWiki"/>
</dbReference>
<dbReference type="GO" id="GO:0046210">
    <property type="term" value="P:nitric oxide catabolic process"/>
    <property type="evidence" value="ECO:0000315"/>
    <property type="project" value="EcoCyc"/>
</dbReference>
<dbReference type="GO" id="GO:0042542">
    <property type="term" value="P:response to hydrogen peroxide"/>
    <property type="evidence" value="ECO:0000270"/>
    <property type="project" value="EcoliWiki"/>
</dbReference>
<dbReference type="CDD" id="cd01914">
    <property type="entry name" value="HCP"/>
    <property type="match status" value="1"/>
</dbReference>
<dbReference type="FunFam" id="1.20.1270.20:FF:000001">
    <property type="entry name" value="Hydroxylamine reductase"/>
    <property type="match status" value="1"/>
</dbReference>
<dbReference type="FunFam" id="1.20.1270.20:FF:000002">
    <property type="entry name" value="Hydroxylamine reductase"/>
    <property type="match status" value="1"/>
</dbReference>
<dbReference type="FunFam" id="3.40.50.2030:FF:000001">
    <property type="entry name" value="Hydroxylamine reductase"/>
    <property type="match status" value="1"/>
</dbReference>
<dbReference type="FunFam" id="3.40.50.2030:FF:000002">
    <property type="entry name" value="Hydroxylamine reductase"/>
    <property type="match status" value="1"/>
</dbReference>
<dbReference type="Gene3D" id="1.20.1270.20">
    <property type="match status" value="2"/>
</dbReference>
<dbReference type="Gene3D" id="3.40.50.2030">
    <property type="match status" value="2"/>
</dbReference>
<dbReference type="HAMAP" id="MF_00069">
    <property type="entry name" value="Hydroxylam_reduct"/>
    <property type="match status" value="1"/>
</dbReference>
<dbReference type="InterPro" id="IPR004137">
    <property type="entry name" value="HCP/CODH"/>
</dbReference>
<dbReference type="InterPro" id="IPR010048">
    <property type="entry name" value="Hydroxylam_reduct"/>
</dbReference>
<dbReference type="InterPro" id="IPR016099">
    <property type="entry name" value="Prismane-like_a/b-sand"/>
</dbReference>
<dbReference type="InterPro" id="IPR011254">
    <property type="entry name" value="Prismane-like_sf"/>
</dbReference>
<dbReference type="InterPro" id="IPR016100">
    <property type="entry name" value="Prismane_a-bundle"/>
</dbReference>
<dbReference type="NCBIfam" id="TIGR01703">
    <property type="entry name" value="hybrid_clust"/>
    <property type="match status" value="1"/>
</dbReference>
<dbReference type="NCBIfam" id="NF003658">
    <property type="entry name" value="PRK05290.1"/>
    <property type="match status" value="1"/>
</dbReference>
<dbReference type="PANTHER" id="PTHR30109">
    <property type="entry name" value="HYDROXYLAMINE REDUCTASE"/>
    <property type="match status" value="1"/>
</dbReference>
<dbReference type="PANTHER" id="PTHR30109:SF0">
    <property type="entry name" value="HYDROXYLAMINE REDUCTASE"/>
    <property type="match status" value="1"/>
</dbReference>
<dbReference type="Pfam" id="PF03063">
    <property type="entry name" value="Prismane"/>
    <property type="match status" value="1"/>
</dbReference>
<dbReference type="PIRSF" id="PIRSF000076">
    <property type="entry name" value="HCP"/>
    <property type="match status" value="1"/>
</dbReference>
<dbReference type="SUPFAM" id="SSF56821">
    <property type="entry name" value="Prismane protein-like"/>
    <property type="match status" value="1"/>
</dbReference>
<keyword id="KW-0001">2Fe-2S</keyword>
<keyword id="KW-0002">3D-structure</keyword>
<keyword id="KW-0963">Cytoplasm</keyword>
<keyword id="KW-0408">Iron</keyword>
<keyword id="KW-0411">Iron-sulfur</keyword>
<keyword id="KW-0479">Metal-binding</keyword>
<keyword id="KW-0560">Oxidoreductase</keyword>
<keyword id="KW-1185">Reference proteome</keyword>
<protein>
    <recommendedName>
        <fullName evidence="7">Hydroxylamine reductase</fullName>
        <ecNumber evidence="4">1.7.99.1</ecNumber>
    </recommendedName>
    <alternativeName>
        <fullName evidence="1">Hybrid-cluster protein</fullName>
        <shortName evidence="1">HCP</shortName>
    </alternativeName>
    <alternativeName>
        <fullName evidence="6">Prismane protein</fullName>
    </alternativeName>
</protein>
<accession>P75825</accession>
<accession>Q9R7R0</accession>
<accession>Q9R7R1</accession>
<name>HCP_ECOLI</name>
<feature type="chain" id="PRO_0000151674" description="Hydroxylamine reductase">
    <location>
        <begin position="1"/>
        <end position="550"/>
    </location>
</feature>
<feature type="binding site" evidence="1">
    <location>
        <position position="3"/>
    </location>
    <ligand>
        <name>[2Fe-2S] cluster</name>
        <dbReference type="ChEBI" id="CHEBI:190135"/>
    </ligand>
</feature>
<feature type="binding site" evidence="1">
    <location>
        <position position="6"/>
    </location>
    <ligand>
        <name>[2Fe-2S] cluster</name>
        <dbReference type="ChEBI" id="CHEBI:190135"/>
    </ligand>
</feature>
<feature type="binding site" evidence="1">
    <location>
        <position position="18"/>
    </location>
    <ligand>
        <name>[2Fe-2S] cluster</name>
        <dbReference type="ChEBI" id="CHEBI:190135"/>
    </ligand>
</feature>
<feature type="binding site" evidence="1">
    <location>
        <position position="25"/>
    </location>
    <ligand>
        <name>[2Fe-2S] cluster</name>
        <dbReference type="ChEBI" id="CHEBI:190135"/>
    </ligand>
</feature>
<feature type="binding site" evidence="1">
    <location>
        <position position="249"/>
    </location>
    <ligand>
        <name>hybrid [4Fe-2O-2S] cluster</name>
        <dbReference type="ChEBI" id="CHEBI:60519"/>
    </ligand>
</feature>
<feature type="binding site" evidence="1">
    <location>
        <position position="273"/>
    </location>
    <ligand>
        <name>hybrid [4Fe-2O-2S] cluster</name>
        <dbReference type="ChEBI" id="CHEBI:60519"/>
    </ligand>
</feature>
<feature type="binding site" evidence="1">
    <location>
        <position position="317"/>
    </location>
    <ligand>
        <name>hybrid [4Fe-2O-2S] cluster</name>
        <dbReference type="ChEBI" id="CHEBI:60519"/>
    </ligand>
</feature>
<feature type="binding site" description="via persulfide group" evidence="1">
    <location>
        <position position="405"/>
    </location>
    <ligand>
        <name>hybrid [4Fe-2O-2S] cluster</name>
        <dbReference type="ChEBI" id="CHEBI:60519"/>
    </ligand>
</feature>
<feature type="binding site" evidence="1">
    <location>
        <position position="433"/>
    </location>
    <ligand>
        <name>hybrid [4Fe-2O-2S] cluster</name>
        <dbReference type="ChEBI" id="CHEBI:60519"/>
    </ligand>
</feature>
<feature type="binding site" evidence="1">
    <location>
        <position position="458"/>
    </location>
    <ligand>
        <name>hybrid [4Fe-2O-2S] cluster</name>
        <dbReference type="ChEBI" id="CHEBI:60519"/>
    </ligand>
</feature>
<feature type="binding site" evidence="1">
    <location>
        <position position="492"/>
    </location>
    <ligand>
        <name>hybrid [4Fe-2O-2S] cluster</name>
        <dbReference type="ChEBI" id="CHEBI:60519"/>
    </ligand>
</feature>
<feature type="binding site" evidence="1">
    <location>
        <position position="494"/>
    </location>
    <ligand>
        <name>hybrid [4Fe-2O-2S] cluster</name>
        <dbReference type="ChEBI" id="CHEBI:60519"/>
    </ligand>
</feature>
<feature type="modified residue" description="Cysteine persulfide" evidence="1">
    <location>
        <position position="405"/>
    </location>
</feature>
<feature type="sequence conflict" description="In Ref. 1; AAC73960." evidence="8" ref="1">
    <original>E</original>
    <variation>V</variation>
    <location>
        <position position="134"/>
    </location>
</feature>
<proteinExistence type="evidence at protein level"/>
<organism>
    <name type="scientific">Escherichia coli (strain K12)</name>
    <dbReference type="NCBI Taxonomy" id="83333"/>
    <lineage>
        <taxon>Bacteria</taxon>
        <taxon>Pseudomonadati</taxon>
        <taxon>Pseudomonadota</taxon>
        <taxon>Gammaproteobacteria</taxon>
        <taxon>Enterobacterales</taxon>
        <taxon>Enterobacteriaceae</taxon>
        <taxon>Escherichia</taxon>
    </lineage>
</organism>
<gene>
    <name evidence="1" type="primary">hcp</name>
    <name type="synonym">ybjW</name>
    <name type="ordered locus">b0873</name>
    <name type="ordered locus">JW0857</name>
</gene>
<evidence type="ECO:0000255" key="1">
    <source>
        <dbReference type="HAMAP-Rule" id="MF_00069"/>
    </source>
</evidence>
<evidence type="ECO:0000269" key="2">
    <source>
    </source>
</evidence>
<evidence type="ECO:0000269" key="3">
    <source>
    </source>
</evidence>
<evidence type="ECO:0000269" key="4">
    <source>
    </source>
</evidence>
<evidence type="ECO:0000269" key="5">
    <source>
    </source>
</evidence>
<evidence type="ECO:0000303" key="6">
    <source>
    </source>
</evidence>
<evidence type="ECO:0000303" key="7">
    <source>
    </source>
</evidence>
<evidence type="ECO:0000305" key="8"/>